<name>AGP25_ARATH</name>
<keyword id="KW-1003">Cell membrane</keyword>
<keyword id="KW-0325">Glycoprotein</keyword>
<keyword id="KW-0336">GPI-anchor</keyword>
<keyword id="KW-0449">Lipoprotein</keyword>
<keyword id="KW-0472">Membrane</keyword>
<keyword id="KW-0654">Proteoglycan</keyword>
<keyword id="KW-1185">Reference proteome</keyword>
<keyword id="KW-0732">Signal</keyword>
<gene>
    <name type="primary">AGP25</name>
    <name type="ordered locus">At5g18690</name>
    <name type="ORF">T1A4.70</name>
</gene>
<reference key="1">
    <citation type="journal article" date="2000" name="Nature">
        <title>Sequence and analysis of chromosome 5 of the plant Arabidopsis thaliana.</title>
        <authorList>
            <person name="Tabata S."/>
            <person name="Kaneko T."/>
            <person name="Nakamura Y."/>
            <person name="Kotani H."/>
            <person name="Kato T."/>
            <person name="Asamizu E."/>
            <person name="Miyajima N."/>
            <person name="Sasamoto S."/>
            <person name="Kimura T."/>
            <person name="Hosouchi T."/>
            <person name="Kawashima K."/>
            <person name="Kohara M."/>
            <person name="Matsumoto M."/>
            <person name="Matsuno A."/>
            <person name="Muraki A."/>
            <person name="Nakayama S."/>
            <person name="Nakazaki N."/>
            <person name="Naruo K."/>
            <person name="Okumura S."/>
            <person name="Shinpo S."/>
            <person name="Takeuchi C."/>
            <person name="Wada T."/>
            <person name="Watanabe A."/>
            <person name="Yamada M."/>
            <person name="Yasuda M."/>
            <person name="Sato S."/>
            <person name="de la Bastide M."/>
            <person name="Huang E."/>
            <person name="Spiegel L."/>
            <person name="Gnoj L."/>
            <person name="O'Shaughnessy A."/>
            <person name="Preston R."/>
            <person name="Habermann K."/>
            <person name="Murray J."/>
            <person name="Johnson D."/>
            <person name="Rohlfing T."/>
            <person name="Nelson J."/>
            <person name="Stoneking T."/>
            <person name="Pepin K."/>
            <person name="Spieth J."/>
            <person name="Sekhon M."/>
            <person name="Armstrong J."/>
            <person name="Becker M."/>
            <person name="Belter E."/>
            <person name="Cordum H."/>
            <person name="Cordes M."/>
            <person name="Courtney L."/>
            <person name="Courtney W."/>
            <person name="Dante M."/>
            <person name="Du H."/>
            <person name="Edwards J."/>
            <person name="Fryman J."/>
            <person name="Haakensen B."/>
            <person name="Lamar E."/>
            <person name="Latreille P."/>
            <person name="Leonard S."/>
            <person name="Meyer R."/>
            <person name="Mulvaney E."/>
            <person name="Ozersky P."/>
            <person name="Riley A."/>
            <person name="Strowmatt C."/>
            <person name="Wagner-McPherson C."/>
            <person name="Wollam A."/>
            <person name="Yoakum M."/>
            <person name="Bell M."/>
            <person name="Dedhia N."/>
            <person name="Parnell L."/>
            <person name="Shah R."/>
            <person name="Rodriguez M."/>
            <person name="Hoon See L."/>
            <person name="Vil D."/>
            <person name="Baker J."/>
            <person name="Kirchoff K."/>
            <person name="Toth K."/>
            <person name="King L."/>
            <person name="Bahret A."/>
            <person name="Miller B."/>
            <person name="Marra M.A."/>
            <person name="Martienssen R."/>
            <person name="McCombie W.R."/>
            <person name="Wilson R.K."/>
            <person name="Murphy G."/>
            <person name="Bancroft I."/>
            <person name="Volckaert G."/>
            <person name="Wambutt R."/>
            <person name="Duesterhoeft A."/>
            <person name="Stiekema W."/>
            <person name="Pohl T."/>
            <person name="Entian K.-D."/>
            <person name="Terryn N."/>
            <person name="Hartley N."/>
            <person name="Bent E."/>
            <person name="Johnson S."/>
            <person name="Langham S.-A."/>
            <person name="McCullagh B."/>
            <person name="Robben J."/>
            <person name="Grymonprez B."/>
            <person name="Zimmermann W."/>
            <person name="Ramsperger U."/>
            <person name="Wedler H."/>
            <person name="Balke K."/>
            <person name="Wedler E."/>
            <person name="Peters S."/>
            <person name="van Staveren M."/>
            <person name="Dirkse W."/>
            <person name="Mooijman P."/>
            <person name="Klein Lankhorst R."/>
            <person name="Weitzenegger T."/>
            <person name="Bothe G."/>
            <person name="Rose M."/>
            <person name="Hauf J."/>
            <person name="Berneiser S."/>
            <person name="Hempel S."/>
            <person name="Feldpausch M."/>
            <person name="Lamberth S."/>
            <person name="Villarroel R."/>
            <person name="Gielen J."/>
            <person name="Ardiles W."/>
            <person name="Bents O."/>
            <person name="Lemcke K."/>
            <person name="Kolesov G."/>
            <person name="Mayer K.F.X."/>
            <person name="Rudd S."/>
            <person name="Schoof H."/>
            <person name="Schueller C."/>
            <person name="Zaccaria P."/>
            <person name="Mewes H.-W."/>
            <person name="Bevan M."/>
            <person name="Fransz P.F."/>
        </authorList>
    </citation>
    <scope>NUCLEOTIDE SEQUENCE [LARGE SCALE GENOMIC DNA]</scope>
    <source>
        <strain>cv. Columbia</strain>
    </source>
</reference>
<reference key="2">
    <citation type="journal article" date="2017" name="Plant J.">
        <title>Araport11: a complete reannotation of the Arabidopsis thaliana reference genome.</title>
        <authorList>
            <person name="Cheng C.Y."/>
            <person name="Krishnakumar V."/>
            <person name="Chan A.P."/>
            <person name="Thibaud-Nissen F."/>
            <person name="Schobel S."/>
            <person name="Town C.D."/>
        </authorList>
    </citation>
    <scope>GENOME REANNOTATION</scope>
    <source>
        <strain>cv. Columbia</strain>
    </source>
</reference>
<reference key="3">
    <citation type="submission" date="2004-01" db="EMBL/GenBank/DDBJ databases">
        <title>Arabidopsis cDNA clones.</title>
        <authorList>
            <person name="Shinn P."/>
            <person name="Chen H."/>
            <person name="Cheuk R.F."/>
            <person name="Kim C.J."/>
            <person name="Ecker J.R."/>
        </authorList>
    </citation>
    <scope>NUCLEOTIDE SEQUENCE [LARGE SCALE MRNA]</scope>
    <source>
        <strain>cv. Columbia</strain>
    </source>
</reference>
<reference key="4">
    <citation type="journal article" date="2002" name="Plant Physiol.">
        <title>Using genomic resources to guide research directions. The arabinogalactan protein gene family as a test case.</title>
        <authorList>
            <person name="Schultz C.J."/>
            <person name="Rumsewicz M.P."/>
            <person name="Johnson K.L."/>
            <person name="Jones B.J."/>
            <person name="Gaspar Y.M."/>
            <person name="Bacic A."/>
        </authorList>
    </citation>
    <scope>GENE FAMILY</scope>
    <scope>NOMENCLATURE</scope>
</reference>
<feature type="signal peptide" evidence="2">
    <location>
        <begin position="1"/>
        <end position="28"/>
    </location>
</feature>
<feature type="chain" id="PRO_0000269005" description="Classical arabinogalactan protein 25">
    <location>
        <begin position="29"/>
        <end position="89"/>
    </location>
</feature>
<feature type="propeptide" id="PRO_0000269006" description="Removed in mature form" evidence="2">
    <location>
        <begin position="90"/>
        <end position="116"/>
    </location>
</feature>
<feature type="region of interest" description="Disordered" evidence="3">
    <location>
        <begin position="40"/>
        <end position="95"/>
    </location>
</feature>
<feature type="compositionally biased region" description="Low complexity" evidence="3">
    <location>
        <begin position="50"/>
        <end position="59"/>
    </location>
</feature>
<feature type="compositionally biased region" description="Low complexity" evidence="3">
    <location>
        <begin position="69"/>
        <end position="82"/>
    </location>
</feature>
<feature type="compositionally biased region" description="Pro residues" evidence="3">
    <location>
        <begin position="83"/>
        <end position="95"/>
    </location>
</feature>
<feature type="lipid moiety-binding region" description="GPI-anchor amidated serine" evidence="2">
    <location>
        <position position="89"/>
    </location>
</feature>
<sequence>MAFSFLNKLLIIFIFIFISLSSSSPTISLVQQLSPEIAPLLPSPGDALPSDDGSGTIPSSPSPPDPDTNDGSYPDPLAFSPFASPPVSSPSPPPSLPSAGVLLISLIISSASFLAL</sequence>
<accession>Q6NN00</accession>
<evidence type="ECO:0000250" key="1"/>
<evidence type="ECO:0000255" key="2"/>
<evidence type="ECO:0000256" key="3">
    <source>
        <dbReference type="SAM" id="MobiDB-lite"/>
    </source>
</evidence>
<evidence type="ECO:0000305" key="4"/>
<dbReference type="EMBL" id="AC051627">
    <property type="status" value="NOT_ANNOTATED_CDS"/>
    <property type="molecule type" value="Genomic_DNA"/>
</dbReference>
<dbReference type="EMBL" id="CP002688">
    <property type="protein sequence ID" value="AED92599.1"/>
    <property type="molecule type" value="Genomic_DNA"/>
</dbReference>
<dbReference type="EMBL" id="BT010668">
    <property type="protein sequence ID" value="AAR20725.1"/>
    <property type="molecule type" value="mRNA"/>
</dbReference>
<dbReference type="EMBL" id="BT011501">
    <property type="protein sequence ID" value="AAS00341.1"/>
    <property type="molecule type" value="mRNA"/>
</dbReference>
<dbReference type="RefSeq" id="NP_197370.1">
    <property type="nucleotide sequence ID" value="NM_121874.4"/>
</dbReference>
<dbReference type="FunCoup" id="Q6NN00">
    <property type="interactions" value="2"/>
</dbReference>
<dbReference type="STRING" id="3702.Q6NN00"/>
<dbReference type="PaxDb" id="3702-AT5G18690.1"/>
<dbReference type="EnsemblPlants" id="AT5G18690.1">
    <property type="protein sequence ID" value="AT5G18690.1"/>
    <property type="gene ID" value="AT5G18690"/>
</dbReference>
<dbReference type="GeneID" id="831987"/>
<dbReference type="Gramene" id="AT5G18690.1">
    <property type="protein sequence ID" value="AT5G18690.1"/>
    <property type="gene ID" value="AT5G18690"/>
</dbReference>
<dbReference type="KEGG" id="ath:AT5G18690"/>
<dbReference type="Araport" id="AT5G18690"/>
<dbReference type="TAIR" id="AT5G18690">
    <property type="gene designation" value="AGP25"/>
</dbReference>
<dbReference type="eggNOG" id="ENOG502S7RY">
    <property type="taxonomic scope" value="Eukaryota"/>
</dbReference>
<dbReference type="HOGENOM" id="CLU_2100251_0_0_1"/>
<dbReference type="InParanoid" id="Q6NN00"/>
<dbReference type="OMA" id="VLVVPYC"/>
<dbReference type="PRO" id="PR:Q6NN00"/>
<dbReference type="Proteomes" id="UP000006548">
    <property type="component" value="Chromosome 5"/>
</dbReference>
<dbReference type="ExpressionAtlas" id="Q6NN00">
    <property type="expression patterns" value="baseline and differential"/>
</dbReference>
<dbReference type="GO" id="GO:0005886">
    <property type="term" value="C:plasma membrane"/>
    <property type="evidence" value="ECO:0007669"/>
    <property type="project" value="UniProtKB-SubCell"/>
</dbReference>
<dbReference type="GO" id="GO:0098552">
    <property type="term" value="C:side of membrane"/>
    <property type="evidence" value="ECO:0007669"/>
    <property type="project" value="UniProtKB-KW"/>
</dbReference>
<dbReference type="InterPro" id="IPR039346">
    <property type="entry name" value="AGP25/26"/>
</dbReference>
<dbReference type="PANTHER" id="PTHR35725:SF3">
    <property type="entry name" value="CLASSICAL ARABINOGALACTAN PROTEIN 25"/>
    <property type="match status" value="1"/>
</dbReference>
<dbReference type="PANTHER" id="PTHR35725">
    <property type="entry name" value="CLASSICAL ARABINOGALACTAN PROTEIN 26"/>
    <property type="match status" value="1"/>
</dbReference>
<proteinExistence type="inferred from homology"/>
<organism>
    <name type="scientific">Arabidopsis thaliana</name>
    <name type="common">Mouse-ear cress</name>
    <dbReference type="NCBI Taxonomy" id="3702"/>
    <lineage>
        <taxon>Eukaryota</taxon>
        <taxon>Viridiplantae</taxon>
        <taxon>Streptophyta</taxon>
        <taxon>Embryophyta</taxon>
        <taxon>Tracheophyta</taxon>
        <taxon>Spermatophyta</taxon>
        <taxon>Magnoliopsida</taxon>
        <taxon>eudicotyledons</taxon>
        <taxon>Gunneridae</taxon>
        <taxon>Pentapetalae</taxon>
        <taxon>rosids</taxon>
        <taxon>malvids</taxon>
        <taxon>Brassicales</taxon>
        <taxon>Brassicaceae</taxon>
        <taxon>Camelineae</taxon>
        <taxon>Arabidopsis</taxon>
    </lineage>
</organism>
<comment type="function">
    <text>Proteoglycan that seems to be implicated in diverse developmental roles such as differentiation, cell-cell recognition, embryogenesis and programmed cell death.</text>
</comment>
<comment type="subcellular location">
    <subcellularLocation>
        <location evidence="4">Cell membrane</location>
        <topology evidence="4">Lipid-anchor</topology>
        <topology evidence="4">GPI-anchor</topology>
    </subcellularLocation>
</comment>
<comment type="PTM">
    <text evidence="1">O-glycosylated on the hydroxyproline residues.</text>
</comment>
<comment type="similarity">
    <text evidence="4">Belongs to the classical AGP family.</text>
</comment>
<protein>
    <recommendedName>
        <fullName>Classical arabinogalactan protein 25</fullName>
    </recommendedName>
</protein>